<keyword id="KW-0010">Activator</keyword>
<keyword id="KW-0143">Chaperone</keyword>
<keyword id="KW-0963">Cytoplasm</keyword>
<keyword id="KW-1185">Reference proteome</keyword>
<keyword id="KW-0804">Transcription</keyword>
<keyword id="KW-0805">Transcription regulation</keyword>
<keyword id="KW-0843">Virulence</keyword>
<accession>P69066</accession>
<accession>P40703</accession>
<accession>Q57260</accession>
<proteinExistence type="evidence at protein level"/>
<comment type="function">
    <text>Type III secretion-associated chaperone required for SipB and SipC stabilization. Prevents premature association of SipB with SipC, which may lead to their targeting for degradation. Along with InvF, required for transcription activation of sigDE (sopB pipC), sicAsipBCDA, and sopE.</text>
</comment>
<comment type="subunit">
    <text>Dimer or higher-order oligomers.</text>
</comment>
<comment type="interaction">
    <interactant intactId="EBI-15784364">
        <id>P69066</id>
    </interactant>
    <interactant intactId="EBI-15784364">
        <id>P69066</id>
        <label>sicA</label>
    </interactant>
    <organismsDiffer>false</organismsDiffer>
    <experiments>2</experiments>
</comment>
<comment type="subcellular location">
    <subcellularLocation>
        <location evidence="1">Cytoplasm</location>
    </subcellularLocation>
</comment>
<comment type="similarity">
    <text evidence="1">Belongs to the LcrH/SycD chaperone family.</text>
</comment>
<reference key="1">
    <citation type="journal article" date="1995" name="J. Bacteriol.">
        <title>Homologs of the Shigella IpaB and IpaC invasins are required for Salmonella typhimurium entry into cultured epithelial cells.</title>
        <authorList>
            <person name="Kaniga K."/>
            <person name="Tucker S.C."/>
            <person name="Trollinger D."/>
            <person name="Galan J.E."/>
        </authorList>
    </citation>
    <scope>NUCLEOTIDE SEQUENCE [GENOMIC DNA]</scope>
    <source>
        <strain>SL1344</strain>
    </source>
</reference>
<reference key="2">
    <citation type="journal article" date="2001" name="Nature">
        <title>Complete genome sequence of Salmonella enterica serovar Typhimurium LT2.</title>
        <authorList>
            <person name="McClelland M."/>
            <person name="Sanderson K.E."/>
            <person name="Spieth J."/>
            <person name="Clifton S.W."/>
            <person name="Latreille P."/>
            <person name="Courtney L."/>
            <person name="Porwollik S."/>
            <person name="Ali J."/>
            <person name="Dante M."/>
            <person name="Du F."/>
            <person name="Hou S."/>
            <person name="Layman D."/>
            <person name="Leonard S."/>
            <person name="Nguyen C."/>
            <person name="Scott K."/>
            <person name="Holmes A."/>
            <person name="Grewal N."/>
            <person name="Mulvaney E."/>
            <person name="Ryan E."/>
            <person name="Sun H."/>
            <person name="Florea L."/>
            <person name="Miller W."/>
            <person name="Stoneking T."/>
            <person name="Nhan M."/>
            <person name="Waterston R."/>
            <person name="Wilson R.K."/>
        </authorList>
    </citation>
    <scope>NUCLEOTIDE SEQUENCE [LARGE SCALE GENOMIC DNA]</scope>
    <source>
        <strain>LT2 / SGSC1412 / ATCC 700720</strain>
    </source>
</reference>
<reference key="3">
    <citation type="journal article" date="1993" name="EMBO J.">
        <title>Cognate gene clusters govern invasion of host epithelial cells by Salmonella typhimurium and Shigella flexneri.</title>
        <authorList>
            <person name="Groisman E.A."/>
            <person name="Ochman H."/>
        </authorList>
    </citation>
    <scope>NUCLEOTIDE SEQUENCE [GENOMIC DNA] OF 1-32</scope>
    <source>
        <strain>ATCC 14028s / SGSG 2262</strain>
    </source>
</reference>
<reference key="4">
    <citation type="journal article" date="2000" name="J. Bacteriol.">
        <title>Complex function for SicA, a Salmonella enterica serovar typhimurium type III secretion-associated chaperone.</title>
        <authorList>
            <person name="Tucker S.C."/>
            <person name="Galan J.E."/>
        </authorList>
    </citation>
    <scope>TYPE III SECRETION CHAPERONE</scope>
    <source>
        <strain>SB300</strain>
        <strain>SL1344</strain>
        <strain>SR-11</strain>
    </source>
</reference>
<reference key="5">
    <citation type="journal article" date="2000" name="Mol. Microbiol.">
        <title>The putative invasion protein chaperone SicA acts together with InvF to activate the expression of Salmonella typhimurium virulence genes.</title>
        <authorList>
            <person name="Darwin K.H."/>
            <person name="Miller V.L."/>
        </authorList>
    </citation>
    <scope>REGULATORY FUNCTION</scope>
    <source>
        <strain>ATCC 14028s / SGSG 2262</strain>
        <strain>LT2</strain>
        <strain>SL1344</strain>
    </source>
</reference>
<reference key="6">
    <citation type="journal article" date="2001" name="EMBO J.">
        <title>Type III secretion chaperone-dependent regulation: activation of virulence genes by SicA and InvF in Salmonella typhimurium.</title>
        <authorList>
            <person name="Darwin K.H."/>
            <person name="Miller V.L."/>
        </authorList>
    </citation>
    <scope>INTERACTION WITH INVF</scope>
    <source>
        <strain>SL1344</strain>
    </source>
</reference>
<sequence>MDYQNNVSEERVAEMIWDAVSEGATLKDVHGIPQDMMDGLYAHAYEFYNQGRLDEAETFFRFLCIYDFYNPDYTMGLAAVCQLKKQFQKACDLYAVAFTLLKNDYRPVFFTGQCQLLMRKAAKARQCFELVNERTEDESLRAKALVYLEALKTAETEQHSEQEKE</sequence>
<dbReference type="EMBL" id="U25631">
    <property type="protein sequence ID" value="AAA75168.1"/>
    <property type="molecule type" value="Genomic_DNA"/>
</dbReference>
<dbReference type="EMBL" id="AE006468">
    <property type="protein sequence ID" value="AAL21766.1"/>
    <property type="molecule type" value="Genomic_DNA"/>
</dbReference>
<dbReference type="EMBL" id="X73525">
    <property type="protein sequence ID" value="CAA51928.1"/>
    <property type="molecule type" value="Genomic_DNA"/>
</dbReference>
<dbReference type="PIR" id="A57357">
    <property type="entry name" value="A57357"/>
</dbReference>
<dbReference type="RefSeq" id="NP_461807.1">
    <property type="nucleotide sequence ID" value="NC_003197.2"/>
</dbReference>
<dbReference type="RefSeq" id="WP_000386309.1">
    <property type="nucleotide sequence ID" value="NC_003197.2"/>
</dbReference>
<dbReference type="SMR" id="P69066"/>
<dbReference type="DIP" id="DIP-60758N"/>
<dbReference type="STRING" id="99287.STM2886"/>
<dbReference type="PaxDb" id="99287-STM2886"/>
<dbReference type="DNASU" id="1254409"/>
<dbReference type="GeneID" id="1254409"/>
<dbReference type="GeneID" id="66757211"/>
<dbReference type="KEGG" id="stm:STM2886"/>
<dbReference type="PATRIC" id="fig|99287.12.peg.3042"/>
<dbReference type="HOGENOM" id="CLU_093829_1_0_6"/>
<dbReference type="OMA" id="FHSAECH"/>
<dbReference type="PhylomeDB" id="P69066"/>
<dbReference type="BioCyc" id="SENT99287:STM2886-MONOMER"/>
<dbReference type="PHI-base" id="PHI:639"/>
<dbReference type="Proteomes" id="UP000001014">
    <property type="component" value="Chromosome"/>
</dbReference>
<dbReference type="GO" id="GO:0005737">
    <property type="term" value="C:cytoplasm"/>
    <property type="evidence" value="ECO:0007669"/>
    <property type="project" value="UniProtKB-SubCell"/>
</dbReference>
<dbReference type="GO" id="GO:0042802">
    <property type="term" value="F:identical protein binding"/>
    <property type="evidence" value="ECO:0000353"/>
    <property type="project" value="IntAct"/>
</dbReference>
<dbReference type="FunFam" id="1.25.40.10:FF:000100">
    <property type="entry name" value="Type III secretion system translocator chaperone SicA"/>
    <property type="match status" value="1"/>
</dbReference>
<dbReference type="Gene3D" id="1.25.40.10">
    <property type="entry name" value="Tetratricopeptide repeat domain"/>
    <property type="match status" value="1"/>
</dbReference>
<dbReference type="InterPro" id="IPR005415">
    <property type="entry name" value="T3SS_Ca_resp_chp_LcrH/SycD"/>
</dbReference>
<dbReference type="InterPro" id="IPR016379">
    <property type="entry name" value="T3SS_Ca_resp_chp_LcrH/SycD_sub"/>
</dbReference>
<dbReference type="InterPro" id="IPR011716">
    <property type="entry name" value="TPR-3"/>
</dbReference>
<dbReference type="InterPro" id="IPR011990">
    <property type="entry name" value="TPR-like_helical_dom_sf"/>
</dbReference>
<dbReference type="NCBIfam" id="TIGR02552">
    <property type="entry name" value="LcrH_SycD"/>
    <property type="match status" value="1"/>
</dbReference>
<dbReference type="NCBIfam" id="NF011859">
    <property type="entry name" value="PRK15331.1"/>
    <property type="match status" value="1"/>
</dbReference>
<dbReference type="Pfam" id="PF07720">
    <property type="entry name" value="TPR_3"/>
    <property type="match status" value="2"/>
</dbReference>
<dbReference type="PIRSF" id="PIRSF003165">
    <property type="entry name" value="Chaperone_SicA"/>
    <property type="match status" value="1"/>
</dbReference>
<dbReference type="PRINTS" id="PR01595">
    <property type="entry name" value="SYCDCHAPRONE"/>
</dbReference>
<dbReference type="SUPFAM" id="SSF48452">
    <property type="entry name" value="TPR-like"/>
    <property type="match status" value="1"/>
</dbReference>
<protein>
    <recommendedName>
        <fullName>Chaperone protein SicA</fullName>
    </recommendedName>
    <alternativeName>
        <fullName>Salmonella invasin chaperone</fullName>
    </alternativeName>
</protein>
<gene>
    <name type="primary">sicA</name>
    <name type="synonym">spaT</name>
    <name type="ordered locus">STM2886</name>
</gene>
<organism>
    <name type="scientific">Salmonella typhimurium (strain LT2 / SGSC1412 / ATCC 700720)</name>
    <dbReference type="NCBI Taxonomy" id="99287"/>
    <lineage>
        <taxon>Bacteria</taxon>
        <taxon>Pseudomonadati</taxon>
        <taxon>Pseudomonadota</taxon>
        <taxon>Gammaproteobacteria</taxon>
        <taxon>Enterobacterales</taxon>
        <taxon>Enterobacteriaceae</taxon>
        <taxon>Salmonella</taxon>
    </lineage>
</organism>
<evidence type="ECO:0000305" key="1"/>
<name>SICA_SALTY</name>
<feature type="chain" id="PRO_0000206489" description="Chaperone protein SicA">
    <location>
        <begin position="1"/>
        <end position="165"/>
    </location>
</feature>